<organism>
    <name type="scientific">Homo sapiens</name>
    <name type="common">Human</name>
    <dbReference type="NCBI Taxonomy" id="9606"/>
    <lineage>
        <taxon>Eukaryota</taxon>
        <taxon>Metazoa</taxon>
        <taxon>Chordata</taxon>
        <taxon>Craniata</taxon>
        <taxon>Vertebrata</taxon>
        <taxon>Euteleostomi</taxon>
        <taxon>Mammalia</taxon>
        <taxon>Eutheria</taxon>
        <taxon>Euarchontoglires</taxon>
        <taxon>Primates</taxon>
        <taxon>Haplorrhini</taxon>
        <taxon>Catarrhini</taxon>
        <taxon>Hominidae</taxon>
        <taxon>Homo</taxon>
    </lineage>
</organism>
<evidence type="ECO:0000255" key="1">
    <source>
        <dbReference type="PROSITE-ProRule" id="PRU00490"/>
    </source>
</evidence>
<evidence type="ECO:0000256" key="2">
    <source>
        <dbReference type="SAM" id="MobiDB-lite"/>
    </source>
</evidence>
<evidence type="ECO:0000269" key="3">
    <source>
    </source>
</evidence>
<evidence type="ECO:0000269" key="4">
    <source>
    </source>
</evidence>
<evidence type="ECO:0000269" key="5">
    <source>
    </source>
</evidence>
<evidence type="ECO:0000269" key="6">
    <source>
    </source>
</evidence>
<evidence type="ECO:0000269" key="7">
    <source>
    </source>
</evidence>
<evidence type="ECO:0000269" key="8">
    <source>
    </source>
</evidence>
<evidence type="ECO:0000303" key="9">
    <source>
    </source>
</evidence>
<evidence type="ECO:0000305" key="10"/>
<evidence type="ECO:0000305" key="11">
    <source>
    </source>
</evidence>
<evidence type="ECO:0000312" key="12">
    <source>
        <dbReference type="HGNC" id="HGNC:16126"/>
    </source>
</evidence>
<evidence type="ECO:0007829" key="13">
    <source>
        <dbReference type="PDB" id="4IQY"/>
    </source>
</evidence>
<evidence type="ECO:0007829" key="14">
    <source>
        <dbReference type="PDB" id="6Y73"/>
    </source>
</evidence>
<comment type="function">
    <text evidence="5 6 7">Removes ADP-ribose from aspartate and glutamate residues in proteins bearing a single ADP-ribose moiety (PubMed:23474712, PubMed:23474714). Inactive towards proteins bearing poly-ADP-ribose (PubMed:23474712, PubMed:23474714). Deacetylates O-acetyl-ADP ribose, a signaling molecule generated by the deacetylation of acetylated lysine residues in histones and other proteins (PubMed:21257746).</text>
</comment>
<comment type="catalytic activity">
    <reaction evidence="11">
        <text>2''-O-acetyl-ADP-D-ribose + H2O = ADP-D-ribose + acetate + H(+)</text>
        <dbReference type="Rhea" id="RHEA:57060"/>
        <dbReference type="ChEBI" id="CHEBI:15377"/>
        <dbReference type="ChEBI" id="CHEBI:15378"/>
        <dbReference type="ChEBI" id="CHEBI:30089"/>
        <dbReference type="ChEBI" id="CHEBI:57967"/>
        <dbReference type="ChEBI" id="CHEBI:83767"/>
    </reaction>
    <physiologicalReaction direction="left-to-right" evidence="11">
        <dbReference type="Rhea" id="RHEA:57061"/>
    </physiologicalReaction>
</comment>
<comment type="catalytic activity">
    <reaction evidence="7">
        <text>4-O-(ADP-D-ribosyl)-L-aspartyl-[protein] + H2O = L-aspartyl-[protein] + ADP-D-ribose + H(+)</text>
        <dbReference type="Rhea" id="RHEA:54428"/>
        <dbReference type="Rhea" id="RHEA-COMP:9867"/>
        <dbReference type="Rhea" id="RHEA-COMP:13832"/>
        <dbReference type="ChEBI" id="CHEBI:15377"/>
        <dbReference type="ChEBI" id="CHEBI:15378"/>
        <dbReference type="ChEBI" id="CHEBI:29961"/>
        <dbReference type="ChEBI" id="CHEBI:57967"/>
        <dbReference type="ChEBI" id="CHEBI:138102"/>
    </reaction>
    <physiologicalReaction direction="left-to-right" evidence="7">
        <dbReference type="Rhea" id="RHEA:54429"/>
    </physiologicalReaction>
</comment>
<comment type="catalytic activity">
    <reaction evidence="6 7">
        <text>5-O-(ADP-D-ribosyl)-L-glutamyl-[protein] + H2O = L-glutamyl-[protein] + ADP-D-ribose + H(+)</text>
        <dbReference type="Rhea" id="RHEA:58248"/>
        <dbReference type="Rhea" id="RHEA-COMP:10208"/>
        <dbReference type="Rhea" id="RHEA-COMP:15089"/>
        <dbReference type="ChEBI" id="CHEBI:15377"/>
        <dbReference type="ChEBI" id="CHEBI:15378"/>
        <dbReference type="ChEBI" id="CHEBI:29973"/>
        <dbReference type="ChEBI" id="CHEBI:57967"/>
        <dbReference type="ChEBI" id="CHEBI:142540"/>
    </reaction>
    <physiologicalReaction direction="left-to-right" evidence="6 7">
        <dbReference type="Rhea" id="RHEA:58249"/>
    </physiologicalReaction>
</comment>
<comment type="catalytic activity">
    <reaction evidence="8">
        <text>alpha-NAD(+) + H2O = ADP-D-ribose + nicotinamide + H(+)</text>
        <dbReference type="Rhea" id="RHEA:68792"/>
        <dbReference type="ChEBI" id="CHEBI:15377"/>
        <dbReference type="ChEBI" id="CHEBI:15378"/>
        <dbReference type="ChEBI" id="CHEBI:17154"/>
        <dbReference type="ChEBI" id="CHEBI:57967"/>
        <dbReference type="ChEBI" id="CHEBI:77017"/>
    </reaction>
</comment>
<comment type="activity regulation">
    <text evidence="6">Subject to product inhibition by ADP-ribose.</text>
</comment>
<comment type="biophysicochemical properties">
    <kinetics>
        <KM evidence="5">107 uM for O-acetyl-ADP-ribose</KM>
    </kinetics>
</comment>
<comment type="subunit">
    <text evidence="6">Interacts with ADP-ribosylated PARP1.</text>
</comment>
<comment type="subcellular location">
    <subcellularLocation>
        <location evidence="6">Nucleus</location>
    </subcellularLocation>
    <text evidence="6">Recruited to DNA lesions, probably via mono-APD-ribosylated proteins.</text>
</comment>
<comment type="alternative products">
    <event type="alternative splicing"/>
    <isoform>
        <id>A1Z1Q3-2</id>
        <name>2</name>
        <sequence type="displayed"/>
    </isoform>
    <isoform>
        <id>A1Z1Q3-1</id>
        <name>1</name>
        <sequence type="described" ref="VSP_059643"/>
    </isoform>
    <isoform>
        <id>A1Z1Q3-4</id>
        <name>4</name>
        <sequence type="described" ref="VSP_059642 VSP_059643"/>
    </isoform>
    <isoform>
        <id>A1Z1Q3-5</id>
        <name>5</name>
        <sequence type="described" ref="VSP_059642"/>
    </isoform>
    <isoform>
        <id>A1Z1Q3-6</id>
        <name>6</name>
        <sequence type="described" ref="VSP_059641 VSP_059644"/>
    </isoform>
</comment>
<comment type="similarity">
    <text evidence="10">Belongs to the MacroD-type family. MacroD1/2-like subfamily.</text>
</comment>
<comment type="sequence caution" evidence="10">
    <conflict type="frameshift">
        <sequence resource="EMBL-CDS" id="BAD18504"/>
    </conflict>
</comment>
<proteinExistence type="evidence at protein level"/>
<gene>
    <name evidence="9 12" type="primary">MACROD2</name>
    <name evidence="12" type="synonym">C20orf133</name>
</gene>
<sequence length="425" mass="47421">MYPSNKKKKVWREEKERLLKMTLEERRKEYLRDYIPLNSILSWKEEMKGKGQNDEENTQETSQVKKSLTEKVSLYRGDITLLEVDAIVNAANASLLGGGGVDGCIHRAAGPCLLAECRNLNGCDTGHAKITCGYDLPAKYVIHTVGPIARGHINGSHKEDLANCYKSSLKLVKENNIRSVAFPCISTGIYGFPNEPAAVIALNTIKEWLAKNHHEVDRIIFCVFLEVDFKIYKKKMNEFFSVDDNNEEEEDVEMKEDSDENGPEEKQSVEEMEEQSQDADGVNTVTVPGPASEEAVEDCKDEDFAKDENITKGGEVTDHSVRDQDHPDGQENDSTKNEIKIETESQSSYMETEELSSNQEDAVIVEQPEVIPLTEDQEEKEGEKAPGEDTPRMPGKSEGSSDLENTPGPDAGAQDEAKEQRNGTK</sequence>
<reference key="1">
    <citation type="submission" date="2006-12" db="EMBL/GenBank/DDBJ databases">
        <title>Homozygous deletions and chromosome amplifications in human pancreatic cancer cell lines identified using a single nucleotide polymorphism array.</title>
        <authorList>
            <person name="Lin L.-J."/>
            <person name="Asaoka Y."/>
            <person name="Tada M."/>
            <person name="Muroyama R."/>
            <person name="Tanaka Y."/>
            <person name="Ohta M."/>
            <person name="Seto M."/>
            <person name="Kanai F."/>
            <person name="Zheng C.-Q."/>
            <person name="Omata M."/>
        </authorList>
    </citation>
    <scope>NUCLEOTIDE SEQUENCE [MRNA] (ISOFORM 1)</scope>
    <source>
        <tissue>Thymus</tissue>
    </source>
</reference>
<reference key="2">
    <citation type="journal article" date="2004" name="Nat. Genet.">
        <title>Complete sequencing and characterization of 21,243 full-length human cDNAs.</title>
        <authorList>
            <person name="Ota T."/>
            <person name="Suzuki Y."/>
            <person name="Nishikawa T."/>
            <person name="Otsuki T."/>
            <person name="Sugiyama T."/>
            <person name="Irie R."/>
            <person name="Wakamatsu A."/>
            <person name="Hayashi K."/>
            <person name="Sato H."/>
            <person name="Nagai K."/>
            <person name="Kimura K."/>
            <person name="Makita H."/>
            <person name="Sekine M."/>
            <person name="Obayashi M."/>
            <person name="Nishi T."/>
            <person name="Shibahara T."/>
            <person name="Tanaka T."/>
            <person name="Ishii S."/>
            <person name="Yamamoto J."/>
            <person name="Saito K."/>
            <person name="Kawai Y."/>
            <person name="Isono Y."/>
            <person name="Nakamura Y."/>
            <person name="Nagahari K."/>
            <person name="Murakami K."/>
            <person name="Yasuda T."/>
            <person name="Iwayanagi T."/>
            <person name="Wagatsuma M."/>
            <person name="Shiratori A."/>
            <person name="Sudo H."/>
            <person name="Hosoiri T."/>
            <person name="Kaku Y."/>
            <person name="Kodaira H."/>
            <person name="Kondo H."/>
            <person name="Sugawara M."/>
            <person name="Takahashi M."/>
            <person name="Kanda K."/>
            <person name="Yokoi T."/>
            <person name="Furuya T."/>
            <person name="Kikkawa E."/>
            <person name="Omura Y."/>
            <person name="Abe K."/>
            <person name="Kamihara K."/>
            <person name="Katsuta N."/>
            <person name="Sato K."/>
            <person name="Tanikawa M."/>
            <person name="Yamazaki M."/>
            <person name="Ninomiya K."/>
            <person name="Ishibashi T."/>
            <person name="Yamashita H."/>
            <person name="Murakawa K."/>
            <person name="Fujimori K."/>
            <person name="Tanai H."/>
            <person name="Kimata M."/>
            <person name="Watanabe M."/>
            <person name="Hiraoka S."/>
            <person name="Chiba Y."/>
            <person name="Ishida S."/>
            <person name="Ono Y."/>
            <person name="Takiguchi S."/>
            <person name="Watanabe S."/>
            <person name="Yosida M."/>
            <person name="Hotuta T."/>
            <person name="Kusano J."/>
            <person name="Kanehori K."/>
            <person name="Takahashi-Fujii A."/>
            <person name="Hara H."/>
            <person name="Tanase T.-O."/>
            <person name="Nomura Y."/>
            <person name="Togiya S."/>
            <person name="Komai F."/>
            <person name="Hara R."/>
            <person name="Takeuchi K."/>
            <person name="Arita M."/>
            <person name="Imose N."/>
            <person name="Musashino K."/>
            <person name="Yuuki H."/>
            <person name="Oshima A."/>
            <person name="Sasaki N."/>
            <person name="Aotsuka S."/>
            <person name="Yoshikawa Y."/>
            <person name="Matsunawa H."/>
            <person name="Ichihara T."/>
            <person name="Shiohata N."/>
            <person name="Sano S."/>
            <person name="Moriya S."/>
            <person name="Momiyama H."/>
            <person name="Satoh N."/>
            <person name="Takami S."/>
            <person name="Terashima Y."/>
            <person name="Suzuki O."/>
            <person name="Nakagawa S."/>
            <person name="Senoh A."/>
            <person name="Mizoguchi H."/>
            <person name="Goto Y."/>
            <person name="Shimizu F."/>
            <person name="Wakebe H."/>
            <person name="Hishigaki H."/>
            <person name="Watanabe T."/>
            <person name="Sugiyama A."/>
            <person name="Takemoto M."/>
            <person name="Kawakami B."/>
            <person name="Yamazaki M."/>
            <person name="Watanabe K."/>
            <person name="Kumagai A."/>
            <person name="Itakura S."/>
            <person name="Fukuzumi Y."/>
            <person name="Fujimori Y."/>
            <person name="Komiyama M."/>
            <person name="Tashiro H."/>
            <person name="Tanigami A."/>
            <person name="Fujiwara T."/>
            <person name="Ono T."/>
            <person name="Yamada K."/>
            <person name="Fujii Y."/>
            <person name="Ozaki K."/>
            <person name="Hirao M."/>
            <person name="Ohmori Y."/>
            <person name="Kawabata A."/>
            <person name="Hikiji T."/>
            <person name="Kobatake N."/>
            <person name="Inagaki H."/>
            <person name="Ikema Y."/>
            <person name="Okamoto S."/>
            <person name="Okitani R."/>
            <person name="Kawakami T."/>
            <person name="Noguchi S."/>
            <person name="Itoh T."/>
            <person name="Shigeta K."/>
            <person name="Senba T."/>
            <person name="Matsumura K."/>
            <person name="Nakajima Y."/>
            <person name="Mizuno T."/>
            <person name="Morinaga M."/>
            <person name="Sasaki M."/>
            <person name="Togashi T."/>
            <person name="Oyama M."/>
            <person name="Hata H."/>
            <person name="Watanabe M."/>
            <person name="Komatsu T."/>
            <person name="Mizushima-Sugano J."/>
            <person name="Satoh T."/>
            <person name="Shirai Y."/>
            <person name="Takahashi Y."/>
            <person name="Nakagawa K."/>
            <person name="Okumura K."/>
            <person name="Nagase T."/>
            <person name="Nomura N."/>
            <person name="Kikuchi H."/>
            <person name="Masuho Y."/>
            <person name="Yamashita R."/>
            <person name="Nakai K."/>
            <person name="Yada T."/>
            <person name="Nakamura Y."/>
            <person name="Ohara O."/>
            <person name="Isogai T."/>
            <person name="Sugano S."/>
        </authorList>
    </citation>
    <scope>NUCLEOTIDE SEQUENCE [LARGE SCALE MRNA] (ISOFORMS 2 AND 5)</scope>
    <scope>VARIANT ILE-58</scope>
    <source>
        <tissue>Testis</tissue>
    </source>
</reference>
<reference key="3">
    <citation type="journal article" date="2001" name="Nature">
        <title>The DNA sequence and comparative analysis of human chromosome 20.</title>
        <authorList>
            <person name="Deloukas P."/>
            <person name="Matthews L.H."/>
            <person name="Ashurst J.L."/>
            <person name="Burton J."/>
            <person name="Gilbert J.G.R."/>
            <person name="Jones M."/>
            <person name="Stavrides G."/>
            <person name="Almeida J.P."/>
            <person name="Babbage A.K."/>
            <person name="Bagguley C.L."/>
            <person name="Bailey J."/>
            <person name="Barlow K.F."/>
            <person name="Bates K.N."/>
            <person name="Beard L.M."/>
            <person name="Beare D.M."/>
            <person name="Beasley O.P."/>
            <person name="Bird C.P."/>
            <person name="Blakey S.E."/>
            <person name="Bridgeman A.M."/>
            <person name="Brown A.J."/>
            <person name="Buck D."/>
            <person name="Burrill W.D."/>
            <person name="Butler A.P."/>
            <person name="Carder C."/>
            <person name="Carter N.P."/>
            <person name="Chapman J.C."/>
            <person name="Clamp M."/>
            <person name="Clark G."/>
            <person name="Clark L.N."/>
            <person name="Clark S.Y."/>
            <person name="Clee C.M."/>
            <person name="Clegg S."/>
            <person name="Cobley V.E."/>
            <person name="Collier R.E."/>
            <person name="Connor R.E."/>
            <person name="Corby N.R."/>
            <person name="Coulson A."/>
            <person name="Coville G.J."/>
            <person name="Deadman R."/>
            <person name="Dhami P.D."/>
            <person name="Dunn M."/>
            <person name="Ellington A.G."/>
            <person name="Frankland J.A."/>
            <person name="Fraser A."/>
            <person name="French L."/>
            <person name="Garner P."/>
            <person name="Grafham D.V."/>
            <person name="Griffiths C."/>
            <person name="Griffiths M.N.D."/>
            <person name="Gwilliam R."/>
            <person name="Hall R.E."/>
            <person name="Hammond S."/>
            <person name="Harley J.L."/>
            <person name="Heath P.D."/>
            <person name="Ho S."/>
            <person name="Holden J.L."/>
            <person name="Howden P.J."/>
            <person name="Huckle E."/>
            <person name="Hunt A.R."/>
            <person name="Hunt S.E."/>
            <person name="Jekosch K."/>
            <person name="Johnson C.M."/>
            <person name="Johnson D."/>
            <person name="Kay M.P."/>
            <person name="Kimberley A.M."/>
            <person name="King A."/>
            <person name="Knights A."/>
            <person name="Laird G.K."/>
            <person name="Lawlor S."/>
            <person name="Lehvaeslaiho M.H."/>
            <person name="Leversha M.A."/>
            <person name="Lloyd C."/>
            <person name="Lloyd D.M."/>
            <person name="Lovell J.D."/>
            <person name="Marsh V.L."/>
            <person name="Martin S.L."/>
            <person name="McConnachie L.J."/>
            <person name="McLay K."/>
            <person name="McMurray A.A."/>
            <person name="Milne S.A."/>
            <person name="Mistry D."/>
            <person name="Moore M.J.F."/>
            <person name="Mullikin J.C."/>
            <person name="Nickerson T."/>
            <person name="Oliver K."/>
            <person name="Parker A."/>
            <person name="Patel R."/>
            <person name="Pearce T.A.V."/>
            <person name="Peck A.I."/>
            <person name="Phillimore B.J.C.T."/>
            <person name="Prathalingam S.R."/>
            <person name="Plumb R.W."/>
            <person name="Ramsay H."/>
            <person name="Rice C.M."/>
            <person name="Ross M.T."/>
            <person name="Scott C.E."/>
            <person name="Sehra H.K."/>
            <person name="Shownkeen R."/>
            <person name="Sims S."/>
            <person name="Skuce C.D."/>
            <person name="Smith M.L."/>
            <person name="Soderlund C."/>
            <person name="Steward C.A."/>
            <person name="Sulston J.E."/>
            <person name="Swann R.M."/>
            <person name="Sycamore N."/>
            <person name="Taylor R."/>
            <person name="Tee L."/>
            <person name="Thomas D.W."/>
            <person name="Thorpe A."/>
            <person name="Tracey A."/>
            <person name="Tromans A.C."/>
            <person name="Vaudin M."/>
            <person name="Wall M."/>
            <person name="Wallis J.M."/>
            <person name="Whitehead S.L."/>
            <person name="Whittaker P."/>
            <person name="Willey D.L."/>
            <person name="Williams L."/>
            <person name="Williams S.A."/>
            <person name="Wilming L."/>
            <person name="Wray P.W."/>
            <person name="Hubbard T."/>
            <person name="Durbin R.M."/>
            <person name="Bentley D.R."/>
            <person name="Beck S."/>
            <person name="Rogers J."/>
        </authorList>
    </citation>
    <scope>NUCLEOTIDE SEQUENCE [LARGE SCALE GENOMIC DNA]</scope>
</reference>
<reference key="4">
    <citation type="submission" date="2005-09" db="EMBL/GenBank/DDBJ databases">
        <authorList>
            <person name="Mural R.J."/>
            <person name="Istrail S."/>
            <person name="Sutton G.G."/>
            <person name="Florea L."/>
            <person name="Halpern A.L."/>
            <person name="Mobarry C.M."/>
            <person name="Lippert R."/>
            <person name="Walenz B."/>
            <person name="Shatkay H."/>
            <person name="Dew I."/>
            <person name="Miller J.R."/>
            <person name="Flanigan M.J."/>
            <person name="Edwards N.J."/>
            <person name="Bolanos R."/>
            <person name="Fasulo D."/>
            <person name="Halldorsson B.V."/>
            <person name="Hannenhalli S."/>
            <person name="Turner R."/>
            <person name="Yooseph S."/>
            <person name="Lu F."/>
            <person name="Nusskern D.R."/>
            <person name="Shue B.C."/>
            <person name="Zheng X.H."/>
            <person name="Zhong F."/>
            <person name="Delcher A.L."/>
            <person name="Huson D.H."/>
            <person name="Kravitz S.A."/>
            <person name="Mouchard L."/>
            <person name="Reinert K."/>
            <person name="Remington K.A."/>
            <person name="Clark A.G."/>
            <person name="Waterman M.S."/>
            <person name="Eichler E.E."/>
            <person name="Adams M.D."/>
            <person name="Hunkapiller M.W."/>
            <person name="Myers E.W."/>
            <person name="Venter J.C."/>
        </authorList>
    </citation>
    <scope>NUCLEOTIDE SEQUENCE [LARGE SCALE GENOMIC DNA]</scope>
</reference>
<reference key="5">
    <citation type="journal article" date="2004" name="Genome Res.">
        <title>The status, quality, and expansion of the NIH full-length cDNA project: the Mammalian Gene Collection (MGC).</title>
        <authorList>
            <consortium name="The MGC Project Team"/>
        </authorList>
    </citation>
    <scope>NUCLEOTIDE SEQUENCE [LARGE SCALE MRNA] (ISOFORMS 4 AND 6)</scope>
    <source>
        <tissue>Lung</tissue>
    </source>
</reference>
<reference key="6">
    <citation type="journal article" date="2008" name="Proteomics">
        <title>Proteomic analysis of ubiquitinated proteins in normal hepatocyte cell line Chang liver cells.</title>
        <authorList>
            <person name="Tan F."/>
            <person name="Lu L."/>
            <person name="Cai Y."/>
            <person name="Wang J."/>
            <person name="Xie Y."/>
            <person name="Wang L."/>
            <person name="Gong Y."/>
            <person name="Xu B.-E."/>
            <person name="Wu J."/>
            <person name="Luo Y."/>
            <person name="Qiang B."/>
            <person name="Yuan J."/>
            <person name="Sun X."/>
            <person name="Peng X."/>
        </authorList>
    </citation>
    <scope>UBIQUITINATION [LARGE SCALE ANALYSIS] AT LYS-170</scope>
    <scope>IDENTIFICATION BY MASS SPECTROMETRY</scope>
    <source>
        <tissue>Liver</tissue>
    </source>
</reference>
<reference key="7">
    <citation type="journal article" date="2011" name="J. Biol. Chem.">
        <title>Identification of macrodomain proteins as novel O-acetyl-ADP-ribose deacetylases.</title>
        <authorList>
            <person name="Chen D."/>
            <person name="Vollmar M."/>
            <person name="Rossi M.N."/>
            <person name="Phillips C."/>
            <person name="Kraehenbuehl R."/>
            <person name="Slade D."/>
            <person name="Mehrotra P.V."/>
            <person name="von Delft F."/>
            <person name="Crosthwaite S.K."/>
            <person name="Gileadi O."/>
            <person name="Denu J.M."/>
            <person name="Ahel I."/>
        </authorList>
    </citation>
    <scope>FUNCTION</scope>
    <scope>CATALYTIC ACTIVITY</scope>
    <scope>BIOPHYSICOCHEMICAL PROPERTIES</scope>
</reference>
<reference key="8">
    <citation type="journal article" date="2013" name="Nat. Struct. Mol. Biol.">
        <title>Macrodomain-containing proteins are new mono-ADP-ribosylhydrolases.</title>
        <authorList>
            <person name="Rosenthal F."/>
            <person name="Feijs K.L."/>
            <person name="Frugier E."/>
            <person name="Bonalli M."/>
            <person name="Forst A.H."/>
            <person name="Imhof R."/>
            <person name="Winkler H.C."/>
            <person name="Fischer D."/>
            <person name="Caflisch A."/>
            <person name="Hassa P.O."/>
            <person name="Luescher B."/>
            <person name="Hottiger M.O."/>
        </authorList>
    </citation>
    <scope>FUNCTION</scope>
    <scope>CATALYTIC ACTIVITY</scope>
    <scope>MUTAGENESIS OF GLY-100; ASP-102 AND HIS-106</scope>
</reference>
<reference key="9">
    <citation type="journal article" date="2019" name="ACS Chem. Biol.">
        <title>The ARH and Macrodomain Families of alpha-ADP-ribose-acceptor Hydrolases Catalyze alpha-NAD+ Hydrolysis.</title>
        <authorList>
            <person name="Stevens L.A."/>
            <person name="Kato J."/>
            <person name="Kasamatsu A."/>
            <person name="Oda H."/>
            <person name="Lee D.Y."/>
            <person name="Moss J."/>
        </authorList>
    </citation>
    <scope>CATALYTIC ACTIVITY</scope>
</reference>
<reference key="10">
    <citation type="journal article" date="2013" name="Nat. Struct. Mol. Biol.">
        <title>A family of macrodomain proteins reverses cellular mono-ADP-ribosylation.</title>
        <authorList>
            <person name="Jankevicius G."/>
            <person name="Hassler M."/>
            <person name="Golia B."/>
            <person name="Rybin V."/>
            <person name="Zacharias M."/>
            <person name="Timinszky G."/>
            <person name="Ladurner A.G."/>
        </authorList>
    </citation>
    <scope>X-RAY CRYSTALLOGRAPHY (1.55 ANGSTROMS) OF 7-243 IN COMPLEX WITH ADP-RIBOSE</scope>
    <scope>FUNCTION</scope>
    <scope>SUBCELLULAR LOCATION</scope>
    <scope>ACTIVITY REGULATION</scope>
    <scope>INTERACTION WITH PARP1</scope>
    <scope>MUTAGENESIS OF ASN-92; ASP-102 AND GLY-188</scope>
</reference>
<keyword id="KW-0002">3D-structure</keyword>
<keyword id="KW-0025">Alternative splicing</keyword>
<keyword id="KW-0227">DNA damage</keyword>
<keyword id="KW-0378">Hydrolase</keyword>
<keyword id="KW-1017">Isopeptide bond</keyword>
<keyword id="KW-0539">Nucleus</keyword>
<keyword id="KW-1267">Proteomics identification</keyword>
<keyword id="KW-1185">Reference proteome</keyword>
<keyword id="KW-0832">Ubl conjugation</keyword>
<accession>A1Z1Q3</accession>
<accession>A6NFF7</accession>
<accession>B0QZ39</accession>
<accession>B3KWV0</accession>
<accession>Q0P6D5</accession>
<accession>Q495E0</accession>
<accession>Q5W199</accession>
<accession>Q6ZN71</accession>
<dbReference type="EC" id="3.5.1.-" evidence="11"/>
<dbReference type="EC" id="3.2.2.-" evidence="7 6"/>
<dbReference type="EMBL" id="EF159161">
    <property type="protein sequence ID" value="ABM46908.1"/>
    <property type="molecule type" value="mRNA"/>
</dbReference>
<dbReference type="EMBL" id="AK131348">
    <property type="protein sequence ID" value="BAD18504.1"/>
    <property type="status" value="ALT_FRAME"/>
    <property type="molecule type" value="mRNA"/>
</dbReference>
<dbReference type="EMBL" id="AK125899">
    <property type="protein sequence ID" value="BAG54262.1"/>
    <property type="molecule type" value="mRNA"/>
</dbReference>
<dbReference type="EMBL" id="AC006198">
    <property type="status" value="NOT_ANNOTATED_CDS"/>
    <property type="molecule type" value="Genomic_DNA"/>
</dbReference>
<dbReference type="EMBL" id="AL035073">
    <property type="status" value="NOT_ANNOTATED_CDS"/>
    <property type="molecule type" value="Genomic_DNA"/>
</dbReference>
<dbReference type="EMBL" id="AL049867">
    <property type="status" value="NOT_ANNOTATED_CDS"/>
    <property type="molecule type" value="Genomic_DNA"/>
</dbReference>
<dbReference type="EMBL" id="AL050324">
    <property type="status" value="NOT_ANNOTATED_CDS"/>
    <property type="molecule type" value="Genomic_DNA"/>
</dbReference>
<dbReference type="EMBL" id="AL118503">
    <property type="status" value="NOT_ANNOTATED_CDS"/>
    <property type="molecule type" value="Genomic_DNA"/>
</dbReference>
<dbReference type="EMBL" id="AL118510">
    <property type="status" value="NOT_ANNOTATED_CDS"/>
    <property type="molecule type" value="Genomic_DNA"/>
</dbReference>
<dbReference type="EMBL" id="AL132826">
    <property type="status" value="NOT_ANNOTATED_CDS"/>
    <property type="molecule type" value="Genomic_DNA"/>
</dbReference>
<dbReference type="EMBL" id="AL133462">
    <property type="status" value="NOT_ANNOTATED_CDS"/>
    <property type="molecule type" value="Genomic_DNA"/>
</dbReference>
<dbReference type="EMBL" id="AL136992">
    <property type="status" value="NOT_ANNOTATED_CDS"/>
    <property type="molecule type" value="Genomic_DNA"/>
</dbReference>
<dbReference type="EMBL" id="AL138808">
    <property type="status" value="NOT_ANNOTATED_CDS"/>
    <property type="molecule type" value="Genomic_DNA"/>
</dbReference>
<dbReference type="EMBL" id="AL139825">
    <property type="status" value="NOT_ANNOTATED_CDS"/>
    <property type="molecule type" value="Genomic_DNA"/>
</dbReference>
<dbReference type="EMBL" id="AL161800">
    <property type="status" value="NOT_ANNOTATED_CDS"/>
    <property type="molecule type" value="Genomic_DNA"/>
</dbReference>
<dbReference type="EMBL" id="AL355133">
    <property type="status" value="NOT_ANNOTATED_CDS"/>
    <property type="molecule type" value="Genomic_DNA"/>
</dbReference>
<dbReference type="EMBL" id="AL049633">
    <property type="status" value="NOT_ANNOTATED_CDS"/>
    <property type="molecule type" value="Genomic_DNA"/>
</dbReference>
<dbReference type="EMBL" id="AL079338">
    <property type="status" value="NOT_ANNOTATED_CDS"/>
    <property type="molecule type" value="Genomic_DNA"/>
</dbReference>
<dbReference type="EMBL" id="AL117333">
    <property type="status" value="NOT_ANNOTATED_CDS"/>
    <property type="molecule type" value="Genomic_DNA"/>
</dbReference>
<dbReference type="EMBL" id="AL121582">
    <property type="status" value="NOT_ANNOTATED_CDS"/>
    <property type="molecule type" value="Genomic_DNA"/>
</dbReference>
<dbReference type="EMBL" id="AL121584">
    <property type="status" value="NOT_ANNOTATED_CDS"/>
    <property type="molecule type" value="Genomic_DNA"/>
</dbReference>
<dbReference type="EMBL" id="AL136991">
    <property type="status" value="NOT_ANNOTATED_CDS"/>
    <property type="molecule type" value="Genomic_DNA"/>
</dbReference>
<dbReference type="EMBL" id="AL158088">
    <property type="status" value="NOT_ANNOTATED_CDS"/>
    <property type="molecule type" value="Genomic_DNA"/>
</dbReference>
<dbReference type="EMBL" id="AL353798">
    <property type="status" value="NOT_ANNOTATED_CDS"/>
    <property type="molecule type" value="Genomic_DNA"/>
</dbReference>
<dbReference type="EMBL" id="AL354773">
    <property type="status" value="NOT_ANNOTATED_CDS"/>
    <property type="molecule type" value="Genomic_DNA"/>
</dbReference>
<dbReference type="EMBL" id="AL357654">
    <property type="status" value="NOT_ANNOTATED_CDS"/>
    <property type="molecule type" value="Genomic_DNA"/>
</dbReference>
<dbReference type="EMBL" id="CH471133">
    <property type="protein sequence ID" value="EAX10293.1"/>
    <property type="molecule type" value="Genomic_DNA"/>
</dbReference>
<dbReference type="EMBL" id="CH471133">
    <property type="protein sequence ID" value="EAX10302.1"/>
    <property type="molecule type" value="Genomic_DNA"/>
</dbReference>
<dbReference type="EMBL" id="BC018687">
    <property type="protein sequence ID" value="AAH18687.1"/>
    <property type="molecule type" value="mRNA"/>
</dbReference>
<dbReference type="EMBL" id="BC101216">
    <property type="status" value="NOT_ANNOTATED_CDS"/>
    <property type="molecule type" value="mRNA"/>
</dbReference>
<dbReference type="EMBL" id="BC101217">
    <property type="status" value="NOT_ANNOTATED_CDS"/>
    <property type="molecule type" value="mRNA"/>
</dbReference>
<dbReference type="EMBL" id="BC101218">
    <property type="status" value="NOT_ANNOTATED_CDS"/>
    <property type="molecule type" value="mRNA"/>
</dbReference>
<dbReference type="EMBL" id="BC101219">
    <property type="status" value="NOT_ANNOTATED_CDS"/>
    <property type="molecule type" value="mRNA"/>
</dbReference>
<dbReference type="EMBL" id="BC126936">
    <property type="status" value="NOT_ANNOTATED_CDS"/>
    <property type="molecule type" value="mRNA"/>
</dbReference>
<dbReference type="EMBL" id="BC035876">
    <property type="status" value="NOT_ANNOTATED_CDS"/>
    <property type="molecule type" value="mRNA"/>
</dbReference>
<dbReference type="CCDS" id="CCDS13120.2">
    <molecule id="A1Z1Q3-2"/>
</dbReference>
<dbReference type="CCDS" id="CCDS33443.1">
    <molecule id="A1Z1Q3-4"/>
</dbReference>
<dbReference type="CCDS" id="CCDS93008.1">
    <molecule id="A1Z1Q3-1"/>
</dbReference>
<dbReference type="RefSeq" id="NP_001028259.1">
    <molecule id="A1Z1Q3-4"/>
    <property type="nucleotide sequence ID" value="NM_001033087.2"/>
</dbReference>
<dbReference type="RefSeq" id="NP_001338590.1">
    <molecule id="A1Z1Q3-1"/>
    <property type="nucleotide sequence ID" value="NM_001351661.2"/>
</dbReference>
<dbReference type="RefSeq" id="NP_542407.2">
    <molecule id="A1Z1Q3-2"/>
    <property type="nucleotide sequence ID" value="NM_080676.6"/>
</dbReference>
<dbReference type="RefSeq" id="XP_016883166.1">
    <property type="nucleotide sequence ID" value="XM_017027677.1"/>
</dbReference>
<dbReference type="PDB" id="4IQY">
    <property type="method" value="X-ray"/>
    <property type="resolution" value="1.55 A"/>
    <property type="chains" value="A/B=7-243"/>
</dbReference>
<dbReference type="PDB" id="6Y4Y">
    <property type="method" value="X-ray"/>
    <property type="resolution" value="1.75 A"/>
    <property type="chains" value="A/B/C/D=7-243"/>
</dbReference>
<dbReference type="PDB" id="6Y4Z">
    <property type="method" value="X-ray"/>
    <property type="resolution" value="1.90 A"/>
    <property type="chains" value="A/B/C/D=7-243"/>
</dbReference>
<dbReference type="PDB" id="6Y73">
    <property type="method" value="X-ray"/>
    <property type="resolution" value="1.70 A"/>
    <property type="chains" value="A/B/C/D/E/F/G/H=7-243"/>
</dbReference>
<dbReference type="PDBsum" id="4IQY"/>
<dbReference type="PDBsum" id="6Y4Y"/>
<dbReference type="PDBsum" id="6Y4Z"/>
<dbReference type="PDBsum" id="6Y73"/>
<dbReference type="SMR" id="A1Z1Q3"/>
<dbReference type="BioGRID" id="126679">
    <property type="interactions" value="8"/>
</dbReference>
<dbReference type="FunCoup" id="A1Z1Q3">
    <property type="interactions" value="1540"/>
</dbReference>
<dbReference type="IntAct" id="A1Z1Q3">
    <property type="interactions" value="5"/>
</dbReference>
<dbReference type="STRING" id="9606.ENSP00000217246"/>
<dbReference type="BindingDB" id="A1Z1Q3"/>
<dbReference type="ChEMBL" id="CHEMBL4295630"/>
<dbReference type="iPTMnet" id="A1Z1Q3"/>
<dbReference type="PhosphoSitePlus" id="A1Z1Q3"/>
<dbReference type="BioMuta" id="MACROD2"/>
<dbReference type="jPOST" id="A1Z1Q3"/>
<dbReference type="MassIVE" id="A1Z1Q3"/>
<dbReference type="PaxDb" id="9606-ENSP00000217246"/>
<dbReference type="PeptideAtlas" id="A1Z1Q3"/>
<dbReference type="ProteomicsDB" id="165">
    <molecule id="A1Z1Q3-1"/>
</dbReference>
<dbReference type="ProteomicsDB" id="166">
    <molecule id="A1Z1Q3-2"/>
</dbReference>
<dbReference type="ProteomicsDB" id="167">
    <molecule id="A1Z1Q3-4"/>
</dbReference>
<dbReference type="ProteomicsDB" id="168">
    <molecule id="A1Z1Q3-5"/>
</dbReference>
<dbReference type="ProteomicsDB" id="169">
    <molecule id="A1Z1Q3-6"/>
</dbReference>
<dbReference type="Pumba" id="A1Z1Q3"/>
<dbReference type="Antibodypedia" id="62792">
    <property type="antibodies" value="23 antibodies from 8 providers"/>
</dbReference>
<dbReference type="DNASU" id="140733"/>
<dbReference type="Ensembl" id="ENST00000217246.8">
    <molecule id="A1Z1Q3-2"/>
    <property type="protein sequence ID" value="ENSP00000217246.4"/>
    <property type="gene ID" value="ENSG00000172264.19"/>
</dbReference>
<dbReference type="Ensembl" id="ENST00000402914.5">
    <molecule id="A1Z1Q3-4"/>
    <property type="protein sequence ID" value="ENSP00000385290.1"/>
    <property type="gene ID" value="ENSG00000172264.19"/>
</dbReference>
<dbReference type="Ensembl" id="ENST00000407045.3">
    <molecule id="A1Z1Q3-6"/>
    <property type="protein sequence ID" value="ENSP00000385516.3"/>
    <property type="gene ID" value="ENSG00000172264.19"/>
</dbReference>
<dbReference type="Ensembl" id="ENST00000684519.1">
    <molecule id="A1Z1Q3-1"/>
    <property type="protein sequence ID" value="ENSP00000507484.1"/>
    <property type="gene ID" value="ENSG00000172264.19"/>
</dbReference>
<dbReference type="GeneID" id="140733"/>
<dbReference type="KEGG" id="hsa:140733"/>
<dbReference type="MANE-Select" id="ENST00000684519.1">
    <molecule id="A1Z1Q3-1"/>
    <property type="protein sequence ID" value="ENSP00000507484.1"/>
    <property type="RefSeq nucleotide sequence ID" value="NM_001351661.2"/>
    <property type="RefSeq protein sequence ID" value="NP_001338590.1"/>
</dbReference>
<dbReference type="UCSC" id="uc002wot.4">
    <molecule id="A1Z1Q3-2"/>
    <property type="organism name" value="human"/>
</dbReference>
<dbReference type="AGR" id="HGNC:16126"/>
<dbReference type="CTD" id="140733"/>
<dbReference type="DisGeNET" id="140733"/>
<dbReference type="GeneCards" id="MACROD2"/>
<dbReference type="HGNC" id="HGNC:16126">
    <property type="gene designation" value="MACROD2"/>
</dbReference>
<dbReference type="HPA" id="ENSG00000172264">
    <property type="expression patterns" value="Low tissue specificity"/>
</dbReference>
<dbReference type="MalaCards" id="MACROD2"/>
<dbReference type="MIM" id="611567">
    <property type="type" value="gene"/>
</dbReference>
<dbReference type="neXtProt" id="NX_A1Z1Q3"/>
<dbReference type="OpenTargets" id="ENSG00000172264"/>
<dbReference type="PharmGKB" id="PA162394843"/>
<dbReference type="VEuPathDB" id="HostDB:ENSG00000172264"/>
<dbReference type="eggNOG" id="KOG2633">
    <property type="taxonomic scope" value="Eukaryota"/>
</dbReference>
<dbReference type="GeneTree" id="ENSGT00940000157404"/>
<dbReference type="HOGENOM" id="CLU_046550_10_3_1"/>
<dbReference type="InParanoid" id="A1Z1Q3"/>
<dbReference type="OMA" id="DSQGSCM"/>
<dbReference type="OrthoDB" id="6133115at2759"/>
<dbReference type="PAN-GO" id="A1Z1Q3">
    <property type="GO annotations" value="5 GO annotations based on evolutionary models"/>
</dbReference>
<dbReference type="PhylomeDB" id="A1Z1Q3"/>
<dbReference type="TreeFam" id="TF341440"/>
<dbReference type="BRENDA" id="3.1.1.106">
    <property type="organism ID" value="2681"/>
</dbReference>
<dbReference type="PathwayCommons" id="A1Z1Q3"/>
<dbReference type="SignaLink" id="A1Z1Q3"/>
<dbReference type="SIGNOR" id="A1Z1Q3"/>
<dbReference type="BioGRID-ORCS" id="140733">
    <property type="hits" value="7 hits in 1149 CRISPR screens"/>
</dbReference>
<dbReference type="ChiTaRS" id="MACROD2">
    <property type="organism name" value="human"/>
</dbReference>
<dbReference type="GenomeRNAi" id="140733"/>
<dbReference type="Pharos" id="A1Z1Q3">
    <property type="development level" value="Tchem"/>
</dbReference>
<dbReference type="PRO" id="PR:A1Z1Q3"/>
<dbReference type="Proteomes" id="UP000005640">
    <property type="component" value="Chromosome 20"/>
</dbReference>
<dbReference type="RNAct" id="A1Z1Q3">
    <property type="molecule type" value="protein"/>
</dbReference>
<dbReference type="Bgee" id="ENSG00000172264">
    <property type="expression patterns" value="Expressed in endothelial cell and 159 other cell types or tissues"/>
</dbReference>
<dbReference type="ExpressionAtlas" id="A1Z1Q3">
    <property type="expression patterns" value="baseline and differential"/>
</dbReference>
<dbReference type="GO" id="GO:0005730">
    <property type="term" value="C:nucleolus"/>
    <property type="evidence" value="ECO:0000314"/>
    <property type="project" value="HPA"/>
</dbReference>
<dbReference type="GO" id="GO:0005654">
    <property type="term" value="C:nucleoplasm"/>
    <property type="evidence" value="ECO:0000314"/>
    <property type="project" value="HPA"/>
</dbReference>
<dbReference type="GO" id="GO:0005634">
    <property type="term" value="C:nucleus"/>
    <property type="evidence" value="ECO:0000314"/>
    <property type="project" value="UniProtKB"/>
</dbReference>
<dbReference type="GO" id="GO:0140293">
    <property type="term" value="F:ADP-ribosylglutamate hydrolase activity"/>
    <property type="evidence" value="ECO:0000314"/>
    <property type="project" value="UniProtKB"/>
</dbReference>
<dbReference type="GO" id="GO:0019213">
    <property type="term" value="F:deacetylase activity"/>
    <property type="evidence" value="ECO:0000314"/>
    <property type="project" value="UniProtKB"/>
</dbReference>
<dbReference type="GO" id="GO:0016798">
    <property type="term" value="F:hydrolase activity, acting on glycosyl bonds"/>
    <property type="evidence" value="ECO:0000314"/>
    <property type="project" value="UniProtKB"/>
</dbReference>
<dbReference type="GO" id="GO:0061463">
    <property type="term" value="F:O-acetyl-ADP-ribose deacetylase activity"/>
    <property type="evidence" value="ECO:0007669"/>
    <property type="project" value="RHEA"/>
</dbReference>
<dbReference type="GO" id="GO:0007420">
    <property type="term" value="P:brain development"/>
    <property type="evidence" value="ECO:0007669"/>
    <property type="project" value="Ensembl"/>
</dbReference>
<dbReference type="GO" id="GO:0006974">
    <property type="term" value="P:DNA damage response"/>
    <property type="evidence" value="ECO:0000315"/>
    <property type="project" value="UniProtKB"/>
</dbReference>
<dbReference type="GO" id="GO:0140291">
    <property type="term" value="P:peptidyl-glutamate ADP-deribosylation"/>
    <property type="evidence" value="ECO:0000314"/>
    <property type="project" value="UniProtKB"/>
</dbReference>
<dbReference type="GO" id="GO:0051725">
    <property type="term" value="P:protein de-ADP-ribosylation"/>
    <property type="evidence" value="ECO:0000314"/>
    <property type="project" value="UniProtKB"/>
</dbReference>
<dbReference type="GO" id="GO:0042278">
    <property type="term" value="P:purine nucleoside metabolic process"/>
    <property type="evidence" value="ECO:0000314"/>
    <property type="project" value="UniProtKB"/>
</dbReference>
<dbReference type="GO" id="GO:0009617">
    <property type="term" value="P:response to bacterium"/>
    <property type="evidence" value="ECO:0007669"/>
    <property type="project" value="Ensembl"/>
</dbReference>
<dbReference type="CDD" id="cd02908">
    <property type="entry name" value="Macro_OAADPr_deacetylase"/>
    <property type="match status" value="1"/>
</dbReference>
<dbReference type="FunFam" id="3.40.220.10:FF:000003">
    <property type="entry name" value="O-acetyl-ADP-ribose deacetylase MACROD2"/>
    <property type="match status" value="1"/>
</dbReference>
<dbReference type="Gene3D" id="3.40.220.10">
    <property type="entry name" value="Leucine Aminopeptidase, subunit E, domain 1"/>
    <property type="match status" value="1"/>
</dbReference>
<dbReference type="InterPro" id="IPR002589">
    <property type="entry name" value="Macro_dom"/>
</dbReference>
<dbReference type="InterPro" id="IPR043472">
    <property type="entry name" value="Macro_dom-like"/>
</dbReference>
<dbReference type="NCBIfam" id="NF001664">
    <property type="entry name" value="PRK00431.1-6"/>
    <property type="match status" value="1"/>
</dbReference>
<dbReference type="PANTHER" id="PTHR11106:SF104">
    <property type="entry name" value="ADP-RIBOSE GLYCOHYDROLASE MACROD2"/>
    <property type="match status" value="1"/>
</dbReference>
<dbReference type="PANTHER" id="PTHR11106">
    <property type="entry name" value="GANGLIOSIDE INDUCED DIFFERENTIATION ASSOCIATED PROTEIN 2-RELATED"/>
    <property type="match status" value="1"/>
</dbReference>
<dbReference type="Pfam" id="PF01661">
    <property type="entry name" value="Macro"/>
    <property type="match status" value="1"/>
</dbReference>
<dbReference type="SMART" id="SM00506">
    <property type="entry name" value="A1pp"/>
    <property type="match status" value="1"/>
</dbReference>
<dbReference type="SUPFAM" id="SSF52949">
    <property type="entry name" value="Macro domain-like"/>
    <property type="match status" value="1"/>
</dbReference>
<dbReference type="PROSITE" id="PS51154">
    <property type="entry name" value="MACRO"/>
    <property type="match status" value="1"/>
</dbReference>
<protein>
    <recommendedName>
        <fullName evidence="10">ADP-ribose glycohydrolase MACROD2</fullName>
    </recommendedName>
    <alternativeName>
        <fullName evidence="9">MACRO domain-containing protein 2</fullName>
    </alternativeName>
    <alternativeName>
        <fullName>O-acetyl-ADP-ribose deacetylase MACROD2</fullName>
        <ecNumber evidence="11">3.5.1.-</ecNumber>
    </alternativeName>
    <alternativeName>
        <fullName evidence="10">[Protein ADP-ribosylaspartate] hydrolase MACROD2</fullName>
        <ecNumber evidence="7">3.2.2.-</ecNumber>
    </alternativeName>
    <alternativeName>
        <fullName evidence="10">[Protein ADP-ribosylglutamate] hydrolase MACROD2</fullName>
        <ecNumber evidence="6 7">3.2.2.-</ecNumber>
    </alternativeName>
</protein>
<name>MACD2_HUMAN</name>
<feature type="chain" id="PRO_0000300461" description="ADP-ribose glycohydrolase MACROD2">
    <location>
        <begin position="1"/>
        <end position="425"/>
    </location>
</feature>
<feature type="domain" description="Macro" evidence="1">
    <location>
        <begin position="59"/>
        <end position="240"/>
    </location>
</feature>
<feature type="region of interest" description="Disordered" evidence="2">
    <location>
        <begin position="243"/>
        <end position="425"/>
    </location>
</feature>
<feature type="compositionally biased region" description="Acidic residues" evidence="2">
    <location>
        <begin position="244"/>
        <end position="262"/>
    </location>
</feature>
<feature type="compositionally biased region" description="Basic and acidic residues" evidence="2">
    <location>
        <begin position="302"/>
        <end position="343"/>
    </location>
</feature>
<feature type="compositionally biased region" description="Polar residues" evidence="2">
    <location>
        <begin position="344"/>
        <end position="360"/>
    </location>
</feature>
<feature type="compositionally biased region" description="Basic and acidic residues" evidence="2">
    <location>
        <begin position="381"/>
        <end position="391"/>
    </location>
</feature>
<feature type="compositionally biased region" description="Basic and acidic residues" evidence="2">
    <location>
        <begin position="415"/>
        <end position="425"/>
    </location>
</feature>
<feature type="binding site" evidence="6">
    <location>
        <begin position="77"/>
        <end position="79"/>
    </location>
    <ligand>
        <name>substrate</name>
    </ligand>
</feature>
<feature type="binding site" evidence="6">
    <location>
        <begin position="90"/>
        <end position="92"/>
    </location>
    <ligand>
        <name>substrate</name>
    </ligand>
</feature>
<feature type="binding site" evidence="6">
    <location>
        <begin position="97"/>
        <end position="102"/>
    </location>
    <ligand>
        <name>substrate</name>
    </ligand>
</feature>
<feature type="binding site" evidence="6">
    <location>
        <begin position="185"/>
        <end position="191"/>
    </location>
    <ligand>
        <name>substrate</name>
    </ligand>
</feature>
<feature type="binding site" evidence="6">
    <location>
        <position position="224"/>
    </location>
    <ligand>
        <name>substrate</name>
    </ligand>
</feature>
<feature type="cross-link" description="Glycyl lysine isopeptide (Lys-Gly) (interchain with G-Cter in ubiquitin)" evidence="4">
    <location>
        <position position="170"/>
    </location>
</feature>
<feature type="splice variant" id="VSP_059641" description="In isoform 6.">
    <location>
        <begin position="1"/>
        <end position="349"/>
    </location>
</feature>
<feature type="splice variant" id="VSP_059642" description="In isoform 4 and isoform 5.">
    <location>
        <begin position="1"/>
        <end position="235"/>
    </location>
</feature>
<feature type="splice variant" id="VSP_059643" description="In isoform 1 and isoform 4.">
    <original>D</original>
    <variation>DVEMNSQVDKVNDPTESQQEDQLI</variation>
    <location>
        <position position="410"/>
    </location>
</feature>
<feature type="splice variant" id="VSP_059644" description="In isoform 6.">
    <original>A</original>
    <variation>VEMNSQVDKVNDPTESQQEDQLI</variation>
    <location>
        <position position="411"/>
    </location>
</feature>
<feature type="sequence variant" id="VAR_056935" description="In dbSNP:rs2990505." evidence="3">
    <original>T</original>
    <variation>I</variation>
    <location>
        <position position="58"/>
    </location>
</feature>
<feature type="sequence variant" id="VAR_061681" description="In dbSNP:rs41275442.">
    <original>T</original>
    <variation>M</variation>
    <location>
        <position position="335"/>
    </location>
</feature>
<feature type="mutagenesis site" description="Reduced ADP-ribosyl hydrolase activity; when associated with A-102." evidence="6">
    <original>N</original>
    <variation>A</variation>
    <location>
        <position position="92"/>
    </location>
</feature>
<feature type="mutagenesis site" description="Abolished hydrolase activity and ability to bind ADP-D-ribose." evidence="7">
    <original>G</original>
    <variation>A</variation>
    <location>
        <position position="100"/>
    </location>
</feature>
<feature type="mutagenesis site" description="Reduced ADP-ribosyl hydrolase activity. Reduced ADP-ribosyl hydrolase activity; when associated with A-92." evidence="6 7">
    <original>D</original>
    <variation>A</variation>
    <location>
        <position position="102"/>
    </location>
</feature>
<feature type="mutagenesis site" description="Reduced hydrolase activity." evidence="7">
    <original>H</original>
    <variation>A</variation>
    <location>
        <position position="106"/>
    </location>
</feature>
<feature type="mutagenesis site" description="Abolishes interaction with ADP-ribosylated proteins. Strongly reduced ADP-ribosyl hydrolase activity." evidence="6">
    <original>G</original>
    <variation>E</variation>
    <location>
        <position position="188"/>
    </location>
</feature>
<feature type="helix" evidence="13">
    <location>
        <begin position="11"/>
        <end position="19"/>
    </location>
</feature>
<feature type="helix" evidence="13">
    <location>
        <begin position="23"/>
        <end position="26"/>
    </location>
</feature>
<feature type="turn" evidence="13">
    <location>
        <begin position="27"/>
        <end position="29"/>
    </location>
</feature>
<feature type="helix" evidence="13">
    <location>
        <begin position="37"/>
        <end position="39"/>
    </location>
</feature>
<feature type="helix" evidence="13">
    <location>
        <begin position="43"/>
        <end position="46"/>
    </location>
</feature>
<feature type="turn" evidence="13">
    <location>
        <begin position="47"/>
        <end position="49"/>
    </location>
</feature>
<feature type="helix" evidence="14">
    <location>
        <begin position="68"/>
        <end position="70"/>
    </location>
</feature>
<feature type="strand" evidence="13">
    <location>
        <begin position="71"/>
        <end position="77"/>
    </location>
</feature>
<feature type="helix" evidence="13">
    <location>
        <begin position="79"/>
        <end position="81"/>
    </location>
</feature>
<feature type="strand" evidence="13">
    <location>
        <begin position="82"/>
        <end position="91"/>
    </location>
</feature>
<feature type="helix" evidence="13">
    <location>
        <begin position="100"/>
        <end position="109"/>
    </location>
</feature>
<feature type="helix" evidence="13">
    <location>
        <begin position="111"/>
        <end position="117"/>
    </location>
</feature>
<feature type="turn" evidence="13">
    <location>
        <begin position="118"/>
        <end position="121"/>
    </location>
</feature>
<feature type="strand" evidence="13">
    <location>
        <begin position="128"/>
        <end position="132"/>
    </location>
</feature>
<feature type="strand" evidence="13">
    <location>
        <begin position="136"/>
        <end position="145"/>
    </location>
</feature>
<feature type="strand" evidence="14">
    <location>
        <begin position="150"/>
        <end position="152"/>
    </location>
</feature>
<feature type="turn" evidence="13">
    <location>
        <begin position="154"/>
        <end position="156"/>
    </location>
</feature>
<feature type="helix" evidence="13">
    <location>
        <begin position="157"/>
        <end position="174"/>
    </location>
</feature>
<feature type="strand" evidence="13">
    <location>
        <begin position="179"/>
        <end position="182"/>
    </location>
</feature>
<feature type="helix" evidence="14">
    <location>
        <begin position="188"/>
        <end position="190"/>
    </location>
</feature>
<feature type="helix" evidence="13">
    <location>
        <begin position="194"/>
        <end position="212"/>
    </location>
</feature>
<feature type="helix" evidence="13">
    <location>
        <begin position="213"/>
        <end position="215"/>
    </location>
</feature>
<feature type="strand" evidence="13">
    <location>
        <begin position="217"/>
        <end position="223"/>
    </location>
</feature>
<feature type="helix" evidence="13">
    <location>
        <begin position="226"/>
        <end position="240"/>
    </location>
</feature>